<organism>
    <name type="scientific">Staphylococcus aureus (strain bovine RF122 / ET3-1)</name>
    <dbReference type="NCBI Taxonomy" id="273036"/>
    <lineage>
        <taxon>Bacteria</taxon>
        <taxon>Bacillati</taxon>
        <taxon>Bacillota</taxon>
        <taxon>Bacilli</taxon>
        <taxon>Bacillales</taxon>
        <taxon>Staphylococcaceae</taxon>
        <taxon>Staphylococcus</taxon>
    </lineage>
</organism>
<accession>Q2YYT9</accession>
<dbReference type="EC" id="1.1.1.-"/>
<dbReference type="EMBL" id="AJ938182">
    <property type="protein sequence ID" value="CAI81867.1"/>
    <property type="molecule type" value="Genomic_DNA"/>
</dbReference>
<dbReference type="RefSeq" id="WP_000417010.1">
    <property type="nucleotide sequence ID" value="NC_007622.1"/>
</dbReference>
<dbReference type="SMR" id="Q2YYT9"/>
<dbReference type="KEGG" id="sab:SAB2178"/>
<dbReference type="HOGENOM" id="CLU_019796_1_2_9"/>
<dbReference type="GO" id="GO:0051287">
    <property type="term" value="F:NAD binding"/>
    <property type="evidence" value="ECO:0007669"/>
    <property type="project" value="InterPro"/>
</dbReference>
<dbReference type="GO" id="GO:0016616">
    <property type="term" value="F:oxidoreductase activity, acting on the CH-OH group of donors, NAD or NADP as acceptor"/>
    <property type="evidence" value="ECO:0007669"/>
    <property type="project" value="InterPro"/>
</dbReference>
<dbReference type="CDD" id="cd12178">
    <property type="entry name" value="2-Hacid_dh_13"/>
    <property type="match status" value="1"/>
</dbReference>
<dbReference type="FunFam" id="3.40.50.720:FF:000462">
    <property type="entry name" value="Glyoxylate reductase (NADP+)"/>
    <property type="match status" value="1"/>
</dbReference>
<dbReference type="Gene3D" id="3.40.50.720">
    <property type="entry name" value="NAD(P)-binding Rossmann-like Domain"/>
    <property type="match status" value="2"/>
</dbReference>
<dbReference type="InterPro" id="IPR050857">
    <property type="entry name" value="D-2-hydroxyacid_DH"/>
</dbReference>
<dbReference type="InterPro" id="IPR006139">
    <property type="entry name" value="D-isomer_2_OHA_DH_cat_dom"/>
</dbReference>
<dbReference type="InterPro" id="IPR006140">
    <property type="entry name" value="D-isomer_DH_NAD-bd"/>
</dbReference>
<dbReference type="InterPro" id="IPR036291">
    <property type="entry name" value="NAD(P)-bd_dom_sf"/>
</dbReference>
<dbReference type="PANTHER" id="PTHR42789">
    <property type="entry name" value="D-ISOMER SPECIFIC 2-HYDROXYACID DEHYDROGENASE FAMILY PROTEIN (AFU_ORTHOLOGUE AFUA_6G10090)"/>
    <property type="match status" value="1"/>
</dbReference>
<dbReference type="PANTHER" id="PTHR42789:SF1">
    <property type="entry name" value="D-ISOMER SPECIFIC 2-HYDROXYACID DEHYDROGENASE FAMILY PROTEIN (AFU_ORTHOLOGUE AFUA_6G10090)"/>
    <property type="match status" value="1"/>
</dbReference>
<dbReference type="Pfam" id="PF00389">
    <property type="entry name" value="2-Hacid_dh"/>
    <property type="match status" value="1"/>
</dbReference>
<dbReference type="Pfam" id="PF02826">
    <property type="entry name" value="2-Hacid_dh_C"/>
    <property type="match status" value="1"/>
</dbReference>
<dbReference type="SUPFAM" id="SSF52283">
    <property type="entry name" value="Formate/glycerate dehydrogenase catalytic domain-like"/>
    <property type="match status" value="1"/>
</dbReference>
<dbReference type="SUPFAM" id="SSF51735">
    <property type="entry name" value="NAD(P)-binding Rossmann-fold domains"/>
    <property type="match status" value="1"/>
</dbReference>
<keyword id="KW-0520">NAD</keyword>
<keyword id="KW-0560">Oxidoreductase</keyword>
<sequence>MEKVYVAGAIPEVGLKLLQEHFEVEMYEGKGLVDKDTLIKGVKNATALISLLSTNVDKDVIDAGKDLKIIANYGAGFNNIDIEYAREKSIDVTNTPKASTNATADLTIGLVLAIARRIVEGDQLSRTTGFDGWAPLFFRGREVSGKTIGIIGLGEIGSAVARRARAFDMDVLYTGPNRKEEKEREIGAKYVDLDTLLKNADFITINAAYNPKMHHLIDTEQFKMMKSTAYLINASRGPIVHEQALVQALKDNEIEGAALDVYEFEPDITDDLKSLNNVVLTPHIGNATFEARDMMSKIVANAAISAVQGEKPQFVVN</sequence>
<reference key="1">
    <citation type="journal article" date="2007" name="PLoS ONE">
        <title>Molecular correlates of host specialization in Staphylococcus aureus.</title>
        <authorList>
            <person name="Herron-Olson L."/>
            <person name="Fitzgerald J.R."/>
            <person name="Musser J.M."/>
            <person name="Kapur V."/>
        </authorList>
    </citation>
    <scope>NUCLEOTIDE SEQUENCE [LARGE SCALE GENOMIC DNA]</scope>
    <source>
        <strain>bovine RF122 / ET3-1</strain>
    </source>
</reference>
<feature type="chain" id="PRO_0000312182" description="Putative 2-hydroxyacid dehydrogenase SAB2178">
    <location>
        <begin position="1"/>
        <end position="317"/>
    </location>
</feature>
<feature type="active site" evidence="1">
    <location>
        <position position="236"/>
    </location>
</feature>
<feature type="active site" evidence="1">
    <location>
        <position position="265"/>
    </location>
</feature>
<feature type="active site" description="Proton donor" evidence="1">
    <location>
        <position position="283"/>
    </location>
</feature>
<feature type="binding site" evidence="1">
    <location>
        <begin position="155"/>
        <end position="156"/>
    </location>
    <ligand>
        <name>NAD(+)</name>
        <dbReference type="ChEBI" id="CHEBI:57540"/>
    </ligand>
</feature>
<feature type="binding site" evidence="1">
    <location>
        <begin position="234"/>
        <end position="236"/>
    </location>
    <ligand>
        <name>NAD(+)</name>
        <dbReference type="ChEBI" id="CHEBI:57540"/>
    </ligand>
</feature>
<feature type="binding site" evidence="1">
    <location>
        <position position="260"/>
    </location>
    <ligand>
        <name>NAD(+)</name>
        <dbReference type="ChEBI" id="CHEBI:57540"/>
    </ligand>
</feature>
<feature type="binding site" evidence="1">
    <location>
        <begin position="283"/>
        <end position="286"/>
    </location>
    <ligand>
        <name>NAD(+)</name>
        <dbReference type="ChEBI" id="CHEBI:57540"/>
    </ligand>
</feature>
<protein>
    <recommendedName>
        <fullName>Putative 2-hydroxyacid dehydrogenase SAB2178</fullName>
        <ecNumber>1.1.1.-</ecNumber>
    </recommendedName>
</protein>
<proteinExistence type="inferred from homology"/>
<evidence type="ECO:0000250" key="1"/>
<evidence type="ECO:0000305" key="2"/>
<name>Y2178_STAAB</name>
<comment type="similarity">
    <text evidence="2">Belongs to the D-isomer specific 2-hydroxyacid dehydrogenase family.</text>
</comment>
<gene>
    <name type="ordered locus">SAB2178</name>
</gene>